<name>THNS2_PONAB</name>
<reference key="1">
    <citation type="submission" date="2004-11" db="EMBL/GenBank/DDBJ databases">
        <authorList>
            <consortium name="The German cDNA consortium"/>
        </authorList>
    </citation>
    <scope>NUCLEOTIDE SEQUENCE [LARGE SCALE MRNA]</scope>
    <source>
        <tissue>Kidney</tissue>
    </source>
</reference>
<sequence length="484" mass="54147">MWYVSTRGIAPRVNFEGALFSGYAPDGGLFMPEELPQLDRKTLCQWSTLSYPGLVKELCALFIGSELIPKDELNDLIDRAFSRFRHREVVHLSRLRNGLNVLELWHGVTYAFKDLSLSCTAQFLQYFLEKREKHVTVVVGTSGDTGSAAIESVQGAKNMDIIVLLPKGHCTKIQELQMTTVLKENVHVFGVEGNSDELDEPIKTVFADVAFVKKHNLMSLNSINWSRVLVQMAHHFFAYFQCMPSLDTHPLPLVEVVVPTGAAGNLAAGYIAQKIGLPVRLVVAVNGNDIIHRTVQQGDFSLSEAVKSTLASAMDIQVPYNMERVFWLLSGSDSQVTRALMEQFERTQSVNLPKELHSKLSEAVTSVSVSDEAITQTMGRCWDENQYLLCPHSAVAVNYHYQQMDRQQPSTPRCCLAPASAAKFPEAVLAAGLTPETPAEIVALEHKETRCTPMRRGDNWMLMLRDTIEDLSRRWRSHALNTSR</sequence>
<dbReference type="EC" id="4.2.3.-"/>
<dbReference type="EMBL" id="CR857212">
    <property type="protein sequence ID" value="CAH89511.1"/>
    <property type="molecule type" value="mRNA"/>
</dbReference>
<dbReference type="RefSeq" id="NP_001127159.1">
    <property type="nucleotide sequence ID" value="NM_001133687.2"/>
</dbReference>
<dbReference type="SMR" id="Q5RFE6"/>
<dbReference type="FunCoup" id="Q5RFE6">
    <property type="interactions" value="4"/>
</dbReference>
<dbReference type="STRING" id="9601.ENSPPYP00000013604"/>
<dbReference type="GeneID" id="100174210"/>
<dbReference type="KEGG" id="pon:100174210"/>
<dbReference type="CTD" id="55258"/>
<dbReference type="eggNOG" id="KOG2616">
    <property type="taxonomic scope" value="Eukaryota"/>
</dbReference>
<dbReference type="InParanoid" id="Q5RFE6"/>
<dbReference type="OrthoDB" id="5203861at2759"/>
<dbReference type="Proteomes" id="UP000001595">
    <property type="component" value="Unplaced"/>
</dbReference>
<dbReference type="GO" id="GO:0016829">
    <property type="term" value="F:lyase activity"/>
    <property type="evidence" value="ECO:0007669"/>
    <property type="project" value="UniProtKB-KW"/>
</dbReference>
<dbReference type="GO" id="GO:0030170">
    <property type="term" value="F:pyridoxal phosphate binding"/>
    <property type="evidence" value="ECO:0007669"/>
    <property type="project" value="TreeGrafter"/>
</dbReference>
<dbReference type="GO" id="GO:0046360">
    <property type="term" value="P:2-oxobutyrate biosynthetic process"/>
    <property type="evidence" value="ECO:0007669"/>
    <property type="project" value="TreeGrafter"/>
</dbReference>
<dbReference type="GO" id="GO:0009071">
    <property type="term" value="P:serine family amino acid catabolic process"/>
    <property type="evidence" value="ECO:0007669"/>
    <property type="project" value="TreeGrafter"/>
</dbReference>
<dbReference type="CDD" id="cd01560">
    <property type="entry name" value="Thr-synth_2"/>
    <property type="match status" value="1"/>
</dbReference>
<dbReference type="FunFam" id="3.90.1380.10:FF:000003">
    <property type="entry name" value="THR4p Threonine synthase"/>
    <property type="match status" value="1"/>
</dbReference>
<dbReference type="FunFam" id="3.40.50.1100:FF:000047">
    <property type="entry name" value="Threonine synthase like 2"/>
    <property type="match status" value="1"/>
</dbReference>
<dbReference type="Gene3D" id="3.40.50.1100">
    <property type="match status" value="2"/>
</dbReference>
<dbReference type="Gene3D" id="3.90.1380.10">
    <property type="entry name" value="Threonine synthase, N-terminal domain"/>
    <property type="match status" value="1"/>
</dbReference>
<dbReference type="InterPro" id="IPR029144">
    <property type="entry name" value="Thr_synth_N"/>
</dbReference>
<dbReference type="InterPro" id="IPR037158">
    <property type="entry name" value="Thr_synth_N_sf"/>
</dbReference>
<dbReference type="InterPro" id="IPR004450">
    <property type="entry name" value="Thr_synthase-like"/>
</dbReference>
<dbReference type="InterPro" id="IPR051166">
    <property type="entry name" value="Threonine_Synthase"/>
</dbReference>
<dbReference type="InterPro" id="IPR001926">
    <property type="entry name" value="TrpB-like_PALP"/>
</dbReference>
<dbReference type="InterPro" id="IPR036052">
    <property type="entry name" value="TrpB-like_PALP_sf"/>
</dbReference>
<dbReference type="NCBIfam" id="TIGR00260">
    <property type="entry name" value="thrC"/>
    <property type="match status" value="1"/>
</dbReference>
<dbReference type="PANTHER" id="PTHR42690">
    <property type="entry name" value="THREONINE SYNTHASE FAMILY MEMBER"/>
    <property type="match status" value="1"/>
</dbReference>
<dbReference type="PANTHER" id="PTHR42690:SF1">
    <property type="entry name" value="THREONINE SYNTHASE-LIKE 2"/>
    <property type="match status" value="1"/>
</dbReference>
<dbReference type="Pfam" id="PF00291">
    <property type="entry name" value="PALP"/>
    <property type="match status" value="1"/>
</dbReference>
<dbReference type="Pfam" id="PF14821">
    <property type="entry name" value="Thr_synth_N"/>
    <property type="match status" value="1"/>
</dbReference>
<dbReference type="SUPFAM" id="SSF53686">
    <property type="entry name" value="Tryptophan synthase beta subunit-like PLP-dependent enzymes"/>
    <property type="match status" value="1"/>
</dbReference>
<comment type="function">
    <text evidence="1">Acts as a catabolic phospho-lyase on both gamma- and beta-phosphorylated substrates. Degrades O-phospho-threonine (PThr) to alpha-ketobutyrate, ammonia and phosphate (By similarity).</text>
</comment>
<comment type="cofactor">
    <cofactor evidence="1">
        <name>pyridoxal 5'-phosphate</name>
        <dbReference type="ChEBI" id="CHEBI:597326"/>
    </cofactor>
</comment>
<comment type="similarity">
    <text evidence="2">Belongs to the threonine synthase family.</text>
</comment>
<evidence type="ECO:0000250" key="1"/>
<evidence type="ECO:0000305" key="2"/>
<organism>
    <name type="scientific">Pongo abelii</name>
    <name type="common">Sumatran orangutan</name>
    <name type="synonym">Pongo pygmaeus abelii</name>
    <dbReference type="NCBI Taxonomy" id="9601"/>
    <lineage>
        <taxon>Eukaryota</taxon>
        <taxon>Metazoa</taxon>
        <taxon>Chordata</taxon>
        <taxon>Craniata</taxon>
        <taxon>Vertebrata</taxon>
        <taxon>Euteleostomi</taxon>
        <taxon>Mammalia</taxon>
        <taxon>Eutheria</taxon>
        <taxon>Euarchontoglires</taxon>
        <taxon>Primates</taxon>
        <taxon>Haplorrhini</taxon>
        <taxon>Catarrhini</taxon>
        <taxon>Hominidae</taxon>
        <taxon>Pongo</taxon>
    </lineage>
</organism>
<feature type="chain" id="PRO_0000306409" description="Threonine synthase-like 2">
    <location>
        <begin position="1"/>
        <end position="484"/>
    </location>
</feature>
<feature type="modified residue" description="N6-(pyridoxal phosphate)lysine" evidence="1">
    <location>
        <position position="113"/>
    </location>
</feature>
<accession>Q5RFE6</accession>
<keyword id="KW-0456">Lyase</keyword>
<keyword id="KW-0663">Pyridoxal phosphate</keyword>
<keyword id="KW-1185">Reference proteome</keyword>
<gene>
    <name type="primary">THNSL2</name>
</gene>
<proteinExistence type="evidence at transcript level"/>
<protein>
    <recommendedName>
        <fullName>Threonine synthase-like 2</fullName>
        <shortName>TSH2</shortName>
        <ecNumber>4.2.3.-</ecNumber>
    </recommendedName>
</protein>